<accession>Q8FGU5</accession>
<reference key="1">
    <citation type="journal article" date="2002" name="Proc. Natl. Acad. Sci. U.S.A.">
        <title>Extensive mosaic structure revealed by the complete genome sequence of uropathogenic Escherichia coli.</title>
        <authorList>
            <person name="Welch R.A."/>
            <person name="Burland V."/>
            <person name="Plunkett G. III"/>
            <person name="Redford P."/>
            <person name="Roesch P."/>
            <person name="Rasko D."/>
            <person name="Buckles E.L."/>
            <person name="Liou S.-R."/>
            <person name="Boutin A."/>
            <person name="Hackett J."/>
            <person name="Stroud D."/>
            <person name="Mayhew G.F."/>
            <person name="Rose D.J."/>
            <person name="Zhou S."/>
            <person name="Schwartz D.C."/>
            <person name="Perna N.T."/>
            <person name="Mobley H.L.T."/>
            <person name="Donnenberg M.S."/>
            <person name="Blattner F.R."/>
        </authorList>
    </citation>
    <scope>NUCLEOTIDE SEQUENCE [LARGE SCALE GENOMIC DNA]</scope>
    <source>
        <strain>CFT073 / ATCC 700928 / UPEC</strain>
    </source>
</reference>
<evidence type="ECO:0000255" key="1">
    <source>
        <dbReference type="HAMAP-Rule" id="MF_01592"/>
    </source>
</evidence>
<keyword id="KW-0378">Hydrolase</keyword>
<keyword id="KW-0460">Magnesium</keyword>
<keyword id="KW-0464">Manganese</keyword>
<keyword id="KW-0479">Metal-binding</keyword>
<keyword id="KW-1185">Reference proteome</keyword>
<proteinExistence type="inferred from homology"/>
<organism>
    <name type="scientific">Escherichia coli O6:H1 (strain CFT073 / ATCC 700928 / UPEC)</name>
    <dbReference type="NCBI Taxonomy" id="199310"/>
    <lineage>
        <taxon>Bacteria</taxon>
        <taxon>Pseudomonadati</taxon>
        <taxon>Pseudomonadota</taxon>
        <taxon>Gammaproteobacteria</taxon>
        <taxon>Enterobacterales</taxon>
        <taxon>Enterobacteriaceae</taxon>
        <taxon>Escherichia</taxon>
    </lineage>
</organism>
<feature type="chain" id="PRO_0000315576" description="Uncharacterized Nudix hydrolase NudL">
    <location>
        <begin position="1"/>
        <end position="192"/>
    </location>
</feature>
<feature type="domain" description="Nudix hydrolase" evidence="1">
    <location>
        <begin position="29"/>
        <end position="160"/>
    </location>
</feature>
<feature type="short sequence motif" description="Nudix box">
    <location>
        <begin position="67"/>
        <end position="89"/>
    </location>
</feature>
<feature type="binding site" evidence="1">
    <location>
        <position position="83"/>
    </location>
    <ligand>
        <name>Mg(2+)</name>
        <dbReference type="ChEBI" id="CHEBI:18420"/>
    </ligand>
</feature>
<feature type="binding site" evidence="1">
    <location>
        <position position="87"/>
    </location>
    <ligand>
        <name>Mg(2+)</name>
        <dbReference type="ChEBI" id="CHEBI:18420"/>
    </ligand>
</feature>
<protein>
    <recommendedName>
        <fullName evidence="1">Uncharacterized Nudix hydrolase NudL</fullName>
        <ecNumber evidence="1">3.6.1.-</ecNumber>
    </recommendedName>
</protein>
<sequence length="192" mass="21494">MEYRSLTLDDFLSRFQLLRPQINRETLNHRQAAVLIPIVRRPQPGLLLTQRSIHLRKHAGQVAFPGGAVDDTDTSVIAAALREAEEEVAIPPSAVEVIGVLPPVDSVTGYQVTPVVGIIPPDLPYRASEDEVSAVFEMPLAQALHLGRYHPLDIYRRGDSHRVWLSWYEQYFVWGMTAGIIRELALQIGVKP</sequence>
<dbReference type="EC" id="3.6.1.-" evidence="1"/>
<dbReference type="EMBL" id="AE014075">
    <property type="protein sequence ID" value="AAN80677.1"/>
    <property type="molecule type" value="Genomic_DNA"/>
</dbReference>
<dbReference type="RefSeq" id="WP_000456733.1">
    <property type="nucleotide sequence ID" value="NZ_CP051263.1"/>
</dbReference>
<dbReference type="SMR" id="Q8FGU5"/>
<dbReference type="STRING" id="199310.c2218"/>
<dbReference type="KEGG" id="ecc:c2218"/>
<dbReference type="eggNOG" id="COG0494">
    <property type="taxonomic scope" value="Bacteria"/>
</dbReference>
<dbReference type="HOGENOM" id="CLU_040940_5_2_6"/>
<dbReference type="BioCyc" id="ECOL199310:C2218-MONOMER"/>
<dbReference type="Proteomes" id="UP000001410">
    <property type="component" value="Chromosome"/>
</dbReference>
<dbReference type="GO" id="GO:0010945">
    <property type="term" value="F:coenzyme A diphosphatase activity"/>
    <property type="evidence" value="ECO:0007669"/>
    <property type="project" value="InterPro"/>
</dbReference>
<dbReference type="GO" id="GO:0000287">
    <property type="term" value="F:magnesium ion binding"/>
    <property type="evidence" value="ECO:0007669"/>
    <property type="project" value="UniProtKB-UniRule"/>
</dbReference>
<dbReference type="GO" id="GO:0030145">
    <property type="term" value="F:manganese ion binding"/>
    <property type="evidence" value="ECO:0007669"/>
    <property type="project" value="UniProtKB-UniRule"/>
</dbReference>
<dbReference type="GO" id="GO:0009132">
    <property type="term" value="P:nucleoside diphosphate metabolic process"/>
    <property type="evidence" value="ECO:0007669"/>
    <property type="project" value="InterPro"/>
</dbReference>
<dbReference type="CDD" id="cd03426">
    <property type="entry name" value="NUDIX_CoAse_Nudt7"/>
    <property type="match status" value="1"/>
</dbReference>
<dbReference type="FunFam" id="3.90.79.10:FF:000013">
    <property type="entry name" value="Uncharacterized Nudix hydrolase NudL"/>
    <property type="match status" value="1"/>
</dbReference>
<dbReference type="Gene3D" id="3.90.79.10">
    <property type="entry name" value="Nucleoside Triphosphate Pyrophosphohydrolase"/>
    <property type="match status" value="1"/>
</dbReference>
<dbReference type="HAMAP" id="MF_01592">
    <property type="entry name" value="Nudix_NudL"/>
    <property type="match status" value="1"/>
</dbReference>
<dbReference type="InterPro" id="IPR045121">
    <property type="entry name" value="CoAse"/>
</dbReference>
<dbReference type="InterPro" id="IPR015797">
    <property type="entry name" value="NUDIX_hydrolase-like_dom_sf"/>
</dbReference>
<dbReference type="InterPro" id="IPR000086">
    <property type="entry name" value="NUDIX_hydrolase_dom"/>
</dbReference>
<dbReference type="InterPro" id="IPR000059">
    <property type="entry name" value="NUDIX_hydrolase_NudL_CS"/>
</dbReference>
<dbReference type="InterPro" id="IPR023735">
    <property type="entry name" value="Nudix_NudL"/>
</dbReference>
<dbReference type="NCBIfam" id="NF007980">
    <property type="entry name" value="PRK10707.1"/>
    <property type="match status" value="1"/>
</dbReference>
<dbReference type="PANTHER" id="PTHR12992:SF11">
    <property type="entry name" value="MITOCHONDRIAL COENZYME A DIPHOSPHATASE NUDT8"/>
    <property type="match status" value="1"/>
</dbReference>
<dbReference type="PANTHER" id="PTHR12992">
    <property type="entry name" value="NUDIX HYDROLASE"/>
    <property type="match status" value="1"/>
</dbReference>
<dbReference type="Pfam" id="PF00293">
    <property type="entry name" value="NUDIX"/>
    <property type="match status" value="1"/>
</dbReference>
<dbReference type="SUPFAM" id="SSF55811">
    <property type="entry name" value="Nudix"/>
    <property type="match status" value="1"/>
</dbReference>
<dbReference type="PROSITE" id="PS51462">
    <property type="entry name" value="NUDIX"/>
    <property type="match status" value="1"/>
</dbReference>
<dbReference type="PROSITE" id="PS01293">
    <property type="entry name" value="NUDIX_COA"/>
    <property type="match status" value="1"/>
</dbReference>
<name>NUDL_ECOL6</name>
<comment type="function">
    <text evidence="1">Probably mediates the hydrolysis of some nucleoside diphosphate derivatives.</text>
</comment>
<comment type="cofactor">
    <cofactor evidence="1">
        <name>Mn(2+)</name>
        <dbReference type="ChEBI" id="CHEBI:29035"/>
    </cofactor>
    <cofactor evidence="1">
        <name>Mg(2+)</name>
        <dbReference type="ChEBI" id="CHEBI:18420"/>
    </cofactor>
</comment>
<comment type="similarity">
    <text evidence="1">Belongs to the Nudix hydrolase family. PCD1 subfamily.</text>
</comment>
<gene>
    <name evidence="1" type="primary">nudL</name>
    <name type="ordered locus">c2218</name>
</gene>